<dbReference type="EC" id="2.1.1.181" evidence="1"/>
<dbReference type="EMBL" id="CP000444">
    <property type="protein sequence ID" value="ABI41128.1"/>
    <property type="molecule type" value="Genomic_DNA"/>
</dbReference>
<dbReference type="SMR" id="Q0I0H7"/>
<dbReference type="KEGG" id="shm:Shewmr7_0122"/>
<dbReference type="HOGENOM" id="CLU_027534_3_0_6"/>
<dbReference type="GO" id="GO:0005737">
    <property type="term" value="C:cytoplasm"/>
    <property type="evidence" value="ECO:0007669"/>
    <property type="project" value="UniProtKB-SubCell"/>
</dbReference>
<dbReference type="GO" id="GO:0052907">
    <property type="term" value="F:23S rRNA (adenine(1618)-N(6))-methyltransferase activity"/>
    <property type="evidence" value="ECO:0007669"/>
    <property type="project" value="UniProtKB-EC"/>
</dbReference>
<dbReference type="GO" id="GO:0070475">
    <property type="term" value="P:rRNA base methylation"/>
    <property type="evidence" value="ECO:0007669"/>
    <property type="project" value="TreeGrafter"/>
</dbReference>
<dbReference type="Gene3D" id="3.40.50.150">
    <property type="entry name" value="Vaccinia Virus protein VP39"/>
    <property type="match status" value="1"/>
</dbReference>
<dbReference type="HAMAP" id="MF_01848">
    <property type="entry name" value="23SrRNA_methyltr_F"/>
    <property type="match status" value="1"/>
</dbReference>
<dbReference type="InterPro" id="IPR010286">
    <property type="entry name" value="METTL16/RlmF"/>
</dbReference>
<dbReference type="InterPro" id="IPR016909">
    <property type="entry name" value="rRNA_lsu_MeTfrase_F"/>
</dbReference>
<dbReference type="InterPro" id="IPR029063">
    <property type="entry name" value="SAM-dependent_MTases_sf"/>
</dbReference>
<dbReference type="NCBIfam" id="NF008725">
    <property type="entry name" value="PRK11727.1"/>
    <property type="match status" value="1"/>
</dbReference>
<dbReference type="PANTHER" id="PTHR13393:SF0">
    <property type="entry name" value="RNA N6-ADENOSINE-METHYLTRANSFERASE METTL16"/>
    <property type="match status" value="1"/>
</dbReference>
<dbReference type="PANTHER" id="PTHR13393">
    <property type="entry name" value="SAM-DEPENDENT METHYLTRANSFERASE"/>
    <property type="match status" value="1"/>
</dbReference>
<dbReference type="Pfam" id="PF05971">
    <property type="entry name" value="Methyltransf_10"/>
    <property type="match status" value="1"/>
</dbReference>
<dbReference type="PIRSF" id="PIRSF029038">
    <property type="entry name" value="Mtase_YbiN_prd"/>
    <property type="match status" value="1"/>
</dbReference>
<dbReference type="SUPFAM" id="SSF53335">
    <property type="entry name" value="S-adenosyl-L-methionine-dependent methyltransferases"/>
    <property type="match status" value="1"/>
</dbReference>
<feature type="chain" id="PRO_0000349964" description="Ribosomal RNA large subunit methyltransferase F">
    <location>
        <begin position="1"/>
        <end position="364"/>
    </location>
</feature>
<feature type="region of interest" description="Disordered" evidence="2">
    <location>
        <begin position="1"/>
        <end position="53"/>
    </location>
</feature>
<feature type="compositionally biased region" description="Low complexity" evidence="2">
    <location>
        <begin position="1"/>
        <end position="17"/>
    </location>
</feature>
<feature type="compositionally biased region" description="Basic residues" evidence="2">
    <location>
        <begin position="33"/>
        <end position="53"/>
    </location>
</feature>
<sequence length="364" mass="40189">MPKPAIKTAAKPATSSAGKRGKPNTPKSVAKPKTAKPKTASKPKVKPGEKKRLHPRNLHINGYDFPALMASYPKLKAFVRPTPYGALSIDFADPLAVKTLNAALLLHHYGLAFWDIPKGALCPPIPGRVDYLHYLADLLFEGGKVKRAAAIRALDIGTGANGVYAILGHQVYDWQFVASDINPQSLTNVQRIIDNNPSLQGHLSLRRQQDDKAVFKGIIQASDRFELTLCNPPFHGSLKEASEGSLRKVRNLQLNRGEQPKATSATLNFGGQAAELWCQGGEKQFLATMIRESQAFAEQCLWFTSLVSKQENLKPCYQALEKLGVDTVKTIEMQQGNKFTRVLAWSFHSQAKRLQWRNQIVSGT</sequence>
<gene>
    <name evidence="1" type="primary">rlmF</name>
    <name type="ordered locus">Shewmr7_0122</name>
</gene>
<name>RLMF_SHESR</name>
<protein>
    <recommendedName>
        <fullName evidence="1">Ribosomal RNA large subunit methyltransferase F</fullName>
        <ecNumber evidence="1">2.1.1.181</ecNumber>
    </recommendedName>
    <alternativeName>
        <fullName evidence="1">23S rRNA mA1618 methyltransferase</fullName>
    </alternativeName>
    <alternativeName>
        <fullName evidence="1">rRNA adenine N-6-methyltransferase</fullName>
    </alternativeName>
</protein>
<reference key="1">
    <citation type="submission" date="2006-08" db="EMBL/GenBank/DDBJ databases">
        <title>Complete sequence of chromosome 1 of Shewanella sp. MR-7.</title>
        <authorList>
            <person name="Copeland A."/>
            <person name="Lucas S."/>
            <person name="Lapidus A."/>
            <person name="Barry K."/>
            <person name="Detter J.C."/>
            <person name="Glavina del Rio T."/>
            <person name="Hammon N."/>
            <person name="Israni S."/>
            <person name="Dalin E."/>
            <person name="Tice H."/>
            <person name="Pitluck S."/>
            <person name="Kiss H."/>
            <person name="Brettin T."/>
            <person name="Bruce D."/>
            <person name="Han C."/>
            <person name="Tapia R."/>
            <person name="Gilna P."/>
            <person name="Schmutz J."/>
            <person name="Larimer F."/>
            <person name="Land M."/>
            <person name="Hauser L."/>
            <person name="Kyrpides N."/>
            <person name="Mikhailova N."/>
            <person name="Nealson K."/>
            <person name="Konstantinidis K."/>
            <person name="Klappenbach J."/>
            <person name="Tiedje J."/>
            <person name="Richardson P."/>
        </authorList>
    </citation>
    <scope>NUCLEOTIDE SEQUENCE [LARGE SCALE GENOMIC DNA]</scope>
    <source>
        <strain>MR-7</strain>
    </source>
</reference>
<proteinExistence type="inferred from homology"/>
<accession>Q0I0H7</accession>
<comment type="function">
    <text evidence="1">Specifically methylates the adenine in position 1618 of 23S rRNA.</text>
</comment>
<comment type="catalytic activity">
    <reaction evidence="1">
        <text>adenosine(1618) in 23S rRNA + S-adenosyl-L-methionine = N(6)-methyladenosine(1618) in 23S rRNA + S-adenosyl-L-homocysteine + H(+)</text>
        <dbReference type="Rhea" id="RHEA:16497"/>
        <dbReference type="Rhea" id="RHEA-COMP:10229"/>
        <dbReference type="Rhea" id="RHEA-COMP:10231"/>
        <dbReference type="ChEBI" id="CHEBI:15378"/>
        <dbReference type="ChEBI" id="CHEBI:57856"/>
        <dbReference type="ChEBI" id="CHEBI:59789"/>
        <dbReference type="ChEBI" id="CHEBI:74411"/>
        <dbReference type="ChEBI" id="CHEBI:74449"/>
        <dbReference type="EC" id="2.1.1.181"/>
    </reaction>
</comment>
<comment type="subcellular location">
    <subcellularLocation>
        <location evidence="1">Cytoplasm</location>
    </subcellularLocation>
</comment>
<comment type="similarity">
    <text evidence="1">Belongs to the methyltransferase superfamily. METTL16/RlmF family.</text>
</comment>
<organism>
    <name type="scientific">Shewanella sp. (strain MR-7)</name>
    <dbReference type="NCBI Taxonomy" id="60481"/>
    <lineage>
        <taxon>Bacteria</taxon>
        <taxon>Pseudomonadati</taxon>
        <taxon>Pseudomonadota</taxon>
        <taxon>Gammaproteobacteria</taxon>
        <taxon>Alteromonadales</taxon>
        <taxon>Shewanellaceae</taxon>
        <taxon>Shewanella</taxon>
    </lineage>
</organism>
<keyword id="KW-0963">Cytoplasm</keyword>
<keyword id="KW-0489">Methyltransferase</keyword>
<keyword id="KW-0698">rRNA processing</keyword>
<keyword id="KW-0949">S-adenosyl-L-methionine</keyword>
<keyword id="KW-0808">Transferase</keyword>
<evidence type="ECO:0000255" key="1">
    <source>
        <dbReference type="HAMAP-Rule" id="MF_01848"/>
    </source>
</evidence>
<evidence type="ECO:0000256" key="2">
    <source>
        <dbReference type="SAM" id="MobiDB-lite"/>
    </source>
</evidence>